<proteinExistence type="inferred from homology"/>
<sequence>MATWANLGLQDSSSPLMEQLNFFHDHTLLILTMITILVGYIMGMLSFNKFTNRFLLHGQTIEIIWTVLPAIILMFIAFPSLRLLYLMDEINTPSITLKSIGHQWYWSYEYSDFLNLEFDSYMVPTNELETNGFRLLDVDNRVVLPMNNQIRILVTATDVLHSWTVPSLGVKVDATPGRLNQLNFLINRPGLFFGQCSEICGANHSFMPIVIESIPMNYFIKWITSMTN</sequence>
<name>COX2_ANOGA</name>
<protein>
    <recommendedName>
        <fullName>Cytochrome c oxidase subunit 2</fullName>
        <ecNumber>7.1.1.9</ecNumber>
    </recommendedName>
    <alternativeName>
        <fullName>Cytochrome c oxidase polypeptide II</fullName>
    </alternativeName>
</protein>
<organism>
    <name type="scientific">Anopheles gambiae</name>
    <name type="common">African malaria mosquito</name>
    <dbReference type="NCBI Taxonomy" id="7165"/>
    <lineage>
        <taxon>Eukaryota</taxon>
        <taxon>Metazoa</taxon>
        <taxon>Ecdysozoa</taxon>
        <taxon>Arthropoda</taxon>
        <taxon>Hexapoda</taxon>
        <taxon>Insecta</taxon>
        <taxon>Pterygota</taxon>
        <taxon>Neoptera</taxon>
        <taxon>Endopterygota</taxon>
        <taxon>Diptera</taxon>
        <taxon>Nematocera</taxon>
        <taxon>Culicoidea</taxon>
        <taxon>Culicidae</taxon>
        <taxon>Anophelinae</taxon>
        <taxon>Anopheles</taxon>
    </lineage>
</organism>
<accession>P34840</accession>
<accession>A6MCV5</accession>
<comment type="function">
    <text evidence="1">Component of the cytochrome c oxidase, the last enzyme in the mitochondrial electron transport chain which drives oxidative phosphorylation. The respiratory chain contains 3 multisubunit complexes succinate dehydrogenase (complex II, CII), ubiquinol-cytochrome c oxidoreductase (cytochrome b-c1 complex, complex III, CIII) and cytochrome c oxidase (complex IV, CIV), that cooperate to transfer electrons derived from NADH and succinate to molecular oxygen, creating an electrochemical gradient over the inner membrane that drives transmembrane transport and the ATP synthase. Cytochrome c oxidase is the component of the respiratory chain that catalyzes the reduction of oxygen to water. Electrons originating from reduced cytochrome c in the intermembrane space (IMS) are transferred via the dinuclear copper A center (CU(A)) of subunit 2 and heme A of subunit 1 to the active site in subunit 1, a binuclear center (BNC) formed by heme A3 and copper B (CU(B)). The BNC reduces molecular oxygen to 2 water molecules using 4 electrons from cytochrome c in the IMS and 4 protons from the mitochondrial matrix.</text>
</comment>
<comment type="catalytic activity">
    <reaction evidence="1">
        <text>4 Fe(II)-[cytochrome c] + O2 + 8 H(+)(in) = 4 Fe(III)-[cytochrome c] + 2 H2O + 4 H(+)(out)</text>
        <dbReference type="Rhea" id="RHEA:11436"/>
        <dbReference type="Rhea" id="RHEA-COMP:10350"/>
        <dbReference type="Rhea" id="RHEA-COMP:14399"/>
        <dbReference type="ChEBI" id="CHEBI:15377"/>
        <dbReference type="ChEBI" id="CHEBI:15378"/>
        <dbReference type="ChEBI" id="CHEBI:15379"/>
        <dbReference type="ChEBI" id="CHEBI:29033"/>
        <dbReference type="ChEBI" id="CHEBI:29034"/>
        <dbReference type="EC" id="7.1.1.9"/>
    </reaction>
    <physiologicalReaction direction="left-to-right" evidence="1">
        <dbReference type="Rhea" id="RHEA:11437"/>
    </physiologicalReaction>
</comment>
<comment type="cofactor">
    <cofactor evidence="1">
        <name>Cu cation</name>
        <dbReference type="ChEBI" id="CHEBI:23378"/>
    </cofactor>
    <text evidence="1">Binds a dinuclear copper A center per subunit.</text>
</comment>
<comment type="subunit">
    <text evidence="1">Component of the cytochrome c oxidase (complex IV, CIV), a multisubunit enzyme composed of a catalytic core of 3 subunits and several supernumerary subunits. The complex exists as a monomer or a dimer and forms supercomplexes (SCs) in the inner mitochondrial membrane with ubiquinol-cytochrome c oxidoreductase (cytochrome b-c1 complex, complex III, CIII).</text>
</comment>
<comment type="subcellular location">
    <subcellularLocation>
        <location evidence="1">Mitochondrion inner membrane</location>
        <topology evidence="1">Multi-pass membrane protein</topology>
    </subcellularLocation>
</comment>
<comment type="similarity">
    <text evidence="3">Belongs to the cytochrome c oxidase subunit 2 family.</text>
</comment>
<gene>
    <name type="primary">COII</name>
</gene>
<reference key="1">
    <citation type="journal article" date="2007" name="Mol. Phylogenet. Evol.">
        <title>Patterns of evolution of mitochondrial cytochrome c oxidase I and II DNA and implications for DNA barcoding.</title>
        <authorList>
            <person name="Roe A.D."/>
            <person name="Sperling F.A."/>
        </authorList>
    </citation>
    <scope>NUCLEOTIDE SEQUENCE [GENOMIC DNA]</scope>
</reference>
<reference key="2">
    <citation type="journal article" date="1993" name="Insect Mol. Biol.">
        <title>The mitochondrial genome of the mosquito Anopheles gambiae: DNA sequence, genome organization, and comparisons with mitochondrial sequences of other insects.</title>
        <authorList>
            <person name="Beard C.B."/>
            <person name="Hamm D.M."/>
            <person name="Collins F.H."/>
        </authorList>
    </citation>
    <scope>NUCLEOTIDE SEQUENCE [LARGE SCALE GENOMIC DNA]</scope>
    <source>
        <strain>G3</strain>
    </source>
</reference>
<dbReference type="EC" id="7.1.1.9"/>
<dbReference type="EMBL" id="DQ792577">
    <property type="protein sequence ID" value="ABH07858.1"/>
    <property type="molecule type" value="Genomic_DNA"/>
</dbReference>
<dbReference type="EMBL" id="DQ792578">
    <property type="protein sequence ID" value="ABH07860.1"/>
    <property type="molecule type" value="Genomic_DNA"/>
</dbReference>
<dbReference type="EMBL" id="L20934">
    <property type="protein sequence ID" value="AAD12192.1"/>
    <property type="molecule type" value="Genomic_DNA"/>
</dbReference>
<dbReference type="PIR" id="T09802">
    <property type="entry name" value="T09802"/>
</dbReference>
<dbReference type="RefSeq" id="NP_008071.1">
    <property type="nucleotide sequence ID" value="NC_002084.1"/>
</dbReference>
<dbReference type="SMR" id="P34840"/>
<dbReference type="FunCoup" id="P34840">
    <property type="interactions" value="135"/>
</dbReference>
<dbReference type="STRING" id="7165.P34840"/>
<dbReference type="PaxDb" id="7165-AGAP028366-PA"/>
<dbReference type="EnsemblMetazoa" id="AGAP028366-RA">
    <property type="protein sequence ID" value="AGAP028366-PA"/>
    <property type="gene ID" value="AGAP028366"/>
</dbReference>
<dbReference type="VEuPathDB" id="VectorBase:AGAMI1_000676"/>
<dbReference type="VEuPathDB" id="VectorBase:AGAP028366"/>
<dbReference type="eggNOG" id="KOG4767">
    <property type="taxonomic scope" value="Eukaryota"/>
</dbReference>
<dbReference type="HOGENOM" id="CLU_036876_2_3_1"/>
<dbReference type="InParanoid" id="P34840"/>
<dbReference type="OMA" id="WSYEYTD"/>
<dbReference type="Proteomes" id="UP000007062">
    <property type="component" value="Mitochondrion"/>
</dbReference>
<dbReference type="GO" id="GO:0005743">
    <property type="term" value="C:mitochondrial inner membrane"/>
    <property type="evidence" value="ECO:0007669"/>
    <property type="project" value="UniProtKB-SubCell"/>
</dbReference>
<dbReference type="GO" id="GO:0005507">
    <property type="term" value="F:copper ion binding"/>
    <property type="evidence" value="ECO:0007669"/>
    <property type="project" value="InterPro"/>
</dbReference>
<dbReference type="GO" id="GO:0004129">
    <property type="term" value="F:cytochrome-c oxidase activity"/>
    <property type="evidence" value="ECO:0007669"/>
    <property type="project" value="UniProtKB-EC"/>
</dbReference>
<dbReference type="GO" id="GO:0042773">
    <property type="term" value="P:ATP synthesis coupled electron transport"/>
    <property type="evidence" value="ECO:0000318"/>
    <property type="project" value="GO_Central"/>
</dbReference>
<dbReference type="CDD" id="cd13912">
    <property type="entry name" value="CcO_II_C"/>
    <property type="match status" value="1"/>
</dbReference>
<dbReference type="FunFam" id="1.10.287.90:FF:000006">
    <property type="entry name" value="Cytochrome c oxidase subunit 2"/>
    <property type="match status" value="1"/>
</dbReference>
<dbReference type="FunFam" id="2.60.40.420:FF:000001">
    <property type="entry name" value="Cytochrome c oxidase subunit 2"/>
    <property type="match status" value="1"/>
</dbReference>
<dbReference type="Gene3D" id="1.10.287.90">
    <property type="match status" value="1"/>
</dbReference>
<dbReference type="Gene3D" id="2.60.40.420">
    <property type="entry name" value="Cupredoxins - blue copper proteins"/>
    <property type="match status" value="1"/>
</dbReference>
<dbReference type="InterPro" id="IPR045187">
    <property type="entry name" value="CcO_II"/>
</dbReference>
<dbReference type="InterPro" id="IPR002429">
    <property type="entry name" value="CcO_II-like_C"/>
</dbReference>
<dbReference type="InterPro" id="IPR034210">
    <property type="entry name" value="CcO_II_C"/>
</dbReference>
<dbReference type="InterPro" id="IPR001505">
    <property type="entry name" value="Copper_CuA"/>
</dbReference>
<dbReference type="InterPro" id="IPR008972">
    <property type="entry name" value="Cupredoxin"/>
</dbReference>
<dbReference type="InterPro" id="IPR014222">
    <property type="entry name" value="Cyt_c_oxidase_su2"/>
</dbReference>
<dbReference type="InterPro" id="IPR011759">
    <property type="entry name" value="Cyt_c_oxidase_su2_TM_dom"/>
</dbReference>
<dbReference type="InterPro" id="IPR036257">
    <property type="entry name" value="Cyt_c_oxidase_su2_TM_sf"/>
</dbReference>
<dbReference type="NCBIfam" id="TIGR02866">
    <property type="entry name" value="CoxB"/>
    <property type="match status" value="1"/>
</dbReference>
<dbReference type="PANTHER" id="PTHR22888:SF9">
    <property type="entry name" value="CYTOCHROME C OXIDASE SUBUNIT 2"/>
    <property type="match status" value="1"/>
</dbReference>
<dbReference type="PANTHER" id="PTHR22888">
    <property type="entry name" value="CYTOCHROME C OXIDASE, SUBUNIT II"/>
    <property type="match status" value="1"/>
</dbReference>
<dbReference type="Pfam" id="PF00116">
    <property type="entry name" value="COX2"/>
    <property type="match status" value="1"/>
</dbReference>
<dbReference type="Pfam" id="PF02790">
    <property type="entry name" value="COX2_TM"/>
    <property type="match status" value="1"/>
</dbReference>
<dbReference type="PRINTS" id="PR01166">
    <property type="entry name" value="CYCOXIDASEII"/>
</dbReference>
<dbReference type="SUPFAM" id="SSF49503">
    <property type="entry name" value="Cupredoxins"/>
    <property type="match status" value="1"/>
</dbReference>
<dbReference type="SUPFAM" id="SSF81464">
    <property type="entry name" value="Cytochrome c oxidase subunit II-like, transmembrane region"/>
    <property type="match status" value="1"/>
</dbReference>
<dbReference type="PROSITE" id="PS00078">
    <property type="entry name" value="COX2"/>
    <property type="match status" value="1"/>
</dbReference>
<dbReference type="PROSITE" id="PS50857">
    <property type="entry name" value="COX2_CUA"/>
    <property type="match status" value="1"/>
</dbReference>
<dbReference type="PROSITE" id="PS50999">
    <property type="entry name" value="COX2_TM"/>
    <property type="match status" value="1"/>
</dbReference>
<keyword id="KW-0186">Copper</keyword>
<keyword id="KW-0249">Electron transport</keyword>
<keyword id="KW-0460">Magnesium</keyword>
<keyword id="KW-0472">Membrane</keyword>
<keyword id="KW-0479">Metal-binding</keyword>
<keyword id="KW-0496">Mitochondrion</keyword>
<keyword id="KW-0999">Mitochondrion inner membrane</keyword>
<keyword id="KW-1185">Reference proteome</keyword>
<keyword id="KW-0679">Respiratory chain</keyword>
<keyword id="KW-1278">Translocase</keyword>
<keyword id="KW-0812">Transmembrane</keyword>
<keyword id="KW-1133">Transmembrane helix</keyword>
<keyword id="KW-0813">Transport</keyword>
<feature type="chain" id="PRO_0000183494" description="Cytochrome c oxidase subunit 2">
    <location>
        <begin position="1"/>
        <end position="228"/>
    </location>
</feature>
<feature type="topological domain" description="Mitochondrial intermembrane" evidence="2">
    <location>
        <begin position="1"/>
        <end position="26"/>
    </location>
</feature>
<feature type="transmembrane region" description="Helical" evidence="2">
    <location>
        <begin position="27"/>
        <end position="48"/>
    </location>
</feature>
<feature type="topological domain" description="Mitochondrial matrix" evidence="2">
    <location>
        <begin position="49"/>
        <end position="62"/>
    </location>
</feature>
<feature type="transmembrane region" description="Helical" evidence="2">
    <location>
        <begin position="63"/>
        <end position="82"/>
    </location>
</feature>
<feature type="topological domain" description="Mitochondrial intermembrane" evidence="2">
    <location>
        <begin position="83"/>
        <end position="228"/>
    </location>
</feature>
<feature type="binding site" evidence="1">
    <location>
        <position position="161"/>
    </location>
    <ligand>
        <name>Cu cation</name>
        <dbReference type="ChEBI" id="CHEBI:23378"/>
        <label>A1</label>
    </ligand>
</feature>
<feature type="binding site" evidence="1">
    <location>
        <position position="196"/>
    </location>
    <ligand>
        <name>Cu cation</name>
        <dbReference type="ChEBI" id="CHEBI:23378"/>
        <label>A1</label>
    </ligand>
</feature>
<feature type="binding site" evidence="1">
    <location>
        <position position="196"/>
    </location>
    <ligand>
        <name>Cu cation</name>
        <dbReference type="ChEBI" id="CHEBI:23378"/>
        <label>A2</label>
    </ligand>
</feature>
<feature type="binding site" evidence="1">
    <location>
        <position position="198"/>
    </location>
    <ligand>
        <name>Cu cation</name>
        <dbReference type="ChEBI" id="CHEBI:23378"/>
        <label>A2</label>
    </ligand>
</feature>
<feature type="binding site" evidence="1">
    <location>
        <position position="198"/>
    </location>
    <ligand>
        <name>Mg(2+)</name>
        <dbReference type="ChEBI" id="CHEBI:18420"/>
        <note>ligand shared with subunit 1</note>
    </ligand>
</feature>
<feature type="binding site" evidence="1">
    <location>
        <position position="200"/>
    </location>
    <ligand>
        <name>Cu cation</name>
        <dbReference type="ChEBI" id="CHEBI:23378"/>
        <label>A1</label>
    </ligand>
</feature>
<feature type="binding site" evidence="1">
    <location>
        <position position="200"/>
    </location>
    <ligand>
        <name>Cu cation</name>
        <dbReference type="ChEBI" id="CHEBI:23378"/>
        <label>A2</label>
    </ligand>
</feature>
<feature type="binding site" evidence="1">
    <location>
        <position position="204"/>
    </location>
    <ligand>
        <name>Cu cation</name>
        <dbReference type="ChEBI" id="CHEBI:23378"/>
        <label>A2</label>
    </ligand>
</feature>
<feature type="binding site" evidence="1">
    <location>
        <position position="207"/>
    </location>
    <ligand>
        <name>Cu cation</name>
        <dbReference type="ChEBI" id="CHEBI:23378"/>
        <label>A1</label>
    </ligand>
</feature>
<evidence type="ECO:0000250" key="1">
    <source>
        <dbReference type="UniProtKB" id="P00410"/>
    </source>
</evidence>
<evidence type="ECO:0000255" key="2"/>
<evidence type="ECO:0000305" key="3"/>
<geneLocation type="mitochondrion"/>